<proteinExistence type="inferred from homology"/>
<organism>
    <name type="scientific">Pseudomonas putida (strain W619)</name>
    <dbReference type="NCBI Taxonomy" id="390235"/>
    <lineage>
        <taxon>Bacteria</taxon>
        <taxon>Pseudomonadati</taxon>
        <taxon>Pseudomonadota</taxon>
        <taxon>Gammaproteobacteria</taxon>
        <taxon>Pseudomonadales</taxon>
        <taxon>Pseudomonadaceae</taxon>
        <taxon>Pseudomonas</taxon>
    </lineage>
</organism>
<name>RS17_PSEPW</name>
<keyword id="KW-0687">Ribonucleoprotein</keyword>
<keyword id="KW-0689">Ribosomal protein</keyword>
<keyword id="KW-0694">RNA-binding</keyword>
<keyword id="KW-0699">rRNA-binding</keyword>
<comment type="function">
    <text evidence="1">One of the primary rRNA binding proteins, it binds specifically to the 5'-end of 16S ribosomal RNA.</text>
</comment>
<comment type="subunit">
    <text evidence="1">Part of the 30S ribosomal subunit.</text>
</comment>
<comment type="similarity">
    <text evidence="1">Belongs to the universal ribosomal protein uS17 family.</text>
</comment>
<evidence type="ECO:0000255" key="1">
    <source>
        <dbReference type="HAMAP-Rule" id="MF_01345"/>
    </source>
</evidence>
<evidence type="ECO:0000305" key="2"/>
<sequence length="88" mass="10074">MAEAEKTVRTLTGRVVSDKMDKTITVLIERRVKHPIYGKYVKRSTKLHAHDESNQCKIGDKVSIRETRPLAKTKSWALVEVLERAVEV</sequence>
<accession>B1JDX5</accession>
<dbReference type="EMBL" id="CP000949">
    <property type="protein sequence ID" value="ACA75216.1"/>
    <property type="molecule type" value="Genomic_DNA"/>
</dbReference>
<dbReference type="SMR" id="B1JDX5"/>
<dbReference type="STRING" id="390235.PputW619_4740"/>
<dbReference type="KEGG" id="ppw:PputW619_4740"/>
<dbReference type="eggNOG" id="COG0186">
    <property type="taxonomic scope" value="Bacteria"/>
</dbReference>
<dbReference type="HOGENOM" id="CLU_073626_1_1_6"/>
<dbReference type="OrthoDB" id="9811714at2"/>
<dbReference type="GO" id="GO:0022627">
    <property type="term" value="C:cytosolic small ribosomal subunit"/>
    <property type="evidence" value="ECO:0007669"/>
    <property type="project" value="TreeGrafter"/>
</dbReference>
<dbReference type="GO" id="GO:0019843">
    <property type="term" value="F:rRNA binding"/>
    <property type="evidence" value="ECO:0007669"/>
    <property type="project" value="UniProtKB-UniRule"/>
</dbReference>
<dbReference type="GO" id="GO:0003735">
    <property type="term" value="F:structural constituent of ribosome"/>
    <property type="evidence" value="ECO:0007669"/>
    <property type="project" value="InterPro"/>
</dbReference>
<dbReference type="GO" id="GO:0006412">
    <property type="term" value="P:translation"/>
    <property type="evidence" value="ECO:0007669"/>
    <property type="project" value="UniProtKB-UniRule"/>
</dbReference>
<dbReference type="CDD" id="cd00364">
    <property type="entry name" value="Ribosomal_uS17"/>
    <property type="match status" value="1"/>
</dbReference>
<dbReference type="FunFam" id="2.40.50.140:FF:000014">
    <property type="entry name" value="30S ribosomal protein S17"/>
    <property type="match status" value="1"/>
</dbReference>
<dbReference type="Gene3D" id="2.40.50.140">
    <property type="entry name" value="Nucleic acid-binding proteins"/>
    <property type="match status" value="1"/>
</dbReference>
<dbReference type="HAMAP" id="MF_01345_B">
    <property type="entry name" value="Ribosomal_uS17_B"/>
    <property type="match status" value="1"/>
</dbReference>
<dbReference type="InterPro" id="IPR012340">
    <property type="entry name" value="NA-bd_OB-fold"/>
</dbReference>
<dbReference type="InterPro" id="IPR000266">
    <property type="entry name" value="Ribosomal_uS17"/>
</dbReference>
<dbReference type="InterPro" id="IPR019984">
    <property type="entry name" value="Ribosomal_uS17_bact/chlr"/>
</dbReference>
<dbReference type="NCBIfam" id="NF004123">
    <property type="entry name" value="PRK05610.1"/>
    <property type="match status" value="1"/>
</dbReference>
<dbReference type="NCBIfam" id="TIGR03635">
    <property type="entry name" value="uS17_bact"/>
    <property type="match status" value="1"/>
</dbReference>
<dbReference type="PANTHER" id="PTHR10744">
    <property type="entry name" value="40S RIBOSOMAL PROTEIN S11 FAMILY MEMBER"/>
    <property type="match status" value="1"/>
</dbReference>
<dbReference type="PANTHER" id="PTHR10744:SF1">
    <property type="entry name" value="SMALL RIBOSOMAL SUBUNIT PROTEIN US17M"/>
    <property type="match status" value="1"/>
</dbReference>
<dbReference type="Pfam" id="PF00366">
    <property type="entry name" value="Ribosomal_S17"/>
    <property type="match status" value="1"/>
</dbReference>
<dbReference type="PRINTS" id="PR00973">
    <property type="entry name" value="RIBOSOMALS17"/>
</dbReference>
<dbReference type="SUPFAM" id="SSF50249">
    <property type="entry name" value="Nucleic acid-binding proteins"/>
    <property type="match status" value="1"/>
</dbReference>
<protein>
    <recommendedName>
        <fullName evidence="1">Small ribosomal subunit protein uS17</fullName>
    </recommendedName>
    <alternativeName>
        <fullName evidence="2">30S ribosomal protein S17</fullName>
    </alternativeName>
</protein>
<gene>
    <name evidence="1" type="primary">rpsQ</name>
    <name type="ordered locus">PputW619_4740</name>
</gene>
<reference key="1">
    <citation type="submission" date="2008-02" db="EMBL/GenBank/DDBJ databases">
        <title>Complete sequence of Pseudomonas putida W619.</title>
        <authorList>
            <person name="Copeland A."/>
            <person name="Lucas S."/>
            <person name="Lapidus A."/>
            <person name="Barry K."/>
            <person name="Detter J.C."/>
            <person name="Glavina del Rio T."/>
            <person name="Dalin E."/>
            <person name="Tice H."/>
            <person name="Pitluck S."/>
            <person name="Chain P."/>
            <person name="Malfatti S."/>
            <person name="Shin M."/>
            <person name="Vergez L."/>
            <person name="Schmutz J."/>
            <person name="Larimer F."/>
            <person name="Land M."/>
            <person name="Hauser L."/>
            <person name="Kyrpides N."/>
            <person name="Kim E."/>
            <person name="Taghavi S."/>
            <person name="Vangronsveld D."/>
            <person name="van der Lelie D."/>
            <person name="Richardson P."/>
        </authorList>
    </citation>
    <scope>NUCLEOTIDE SEQUENCE [LARGE SCALE GENOMIC DNA]</scope>
    <source>
        <strain>W619</strain>
    </source>
</reference>
<feature type="chain" id="PRO_1000143288" description="Small ribosomal subunit protein uS17">
    <location>
        <begin position="1"/>
        <end position="88"/>
    </location>
</feature>